<keyword id="KW-1185">Reference proteome</keyword>
<keyword id="KW-0687">Ribonucleoprotein</keyword>
<keyword id="KW-0689">Ribosomal protein</keyword>
<gene>
    <name evidence="1" type="primary">rplM</name>
    <name type="ordered locus">APL_0600</name>
</gene>
<proteinExistence type="inferred from homology"/>
<organism>
    <name type="scientific">Actinobacillus pleuropneumoniae serotype 5b (strain L20)</name>
    <dbReference type="NCBI Taxonomy" id="416269"/>
    <lineage>
        <taxon>Bacteria</taxon>
        <taxon>Pseudomonadati</taxon>
        <taxon>Pseudomonadota</taxon>
        <taxon>Gammaproteobacteria</taxon>
        <taxon>Pasteurellales</taxon>
        <taxon>Pasteurellaceae</taxon>
        <taxon>Actinobacillus</taxon>
    </lineage>
</organism>
<dbReference type="EMBL" id="CP000569">
    <property type="protein sequence ID" value="ABN73702.1"/>
    <property type="molecule type" value="Genomic_DNA"/>
</dbReference>
<dbReference type="RefSeq" id="WP_005596850.1">
    <property type="nucleotide sequence ID" value="NC_009053.1"/>
</dbReference>
<dbReference type="SMR" id="A3MZW6"/>
<dbReference type="STRING" id="416269.APL_0600"/>
<dbReference type="EnsemblBacteria" id="ABN73702">
    <property type="protein sequence ID" value="ABN73702"/>
    <property type="gene ID" value="APL_0600"/>
</dbReference>
<dbReference type="GeneID" id="92742690"/>
<dbReference type="KEGG" id="apl:APL_0600"/>
<dbReference type="eggNOG" id="COG0102">
    <property type="taxonomic scope" value="Bacteria"/>
</dbReference>
<dbReference type="HOGENOM" id="CLU_082184_2_2_6"/>
<dbReference type="Proteomes" id="UP000001432">
    <property type="component" value="Chromosome"/>
</dbReference>
<dbReference type="GO" id="GO:0022625">
    <property type="term" value="C:cytosolic large ribosomal subunit"/>
    <property type="evidence" value="ECO:0007669"/>
    <property type="project" value="TreeGrafter"/>
</dbReference>
<dbReference type="GO" id="GO:0003729">
    <property type="term" value="F:mRNA binding"/>
    <property type="evidence" value="ECO:0007669"/>
    <property type="project" value="TreeGrafter"/>
</dbReference>
<dbReference type="GO" id="GO:0003735">
    <property type="term" value="F:structural constituent of ribosome"/>
    <property type="evidence" value="ECO:0007669"/>
    <property type="project" value="InterPro"/>
</dbReference>
<dbReference type="GO" id="GO:0017148">
    <property type="term" value="P:negative regulation of translation"/>
    <property type="evidence" value="ECO:0007669"/>
    <property type="project" value="TreeGrafter"/>
</dbReference>
<dbReference type="GO" id="GO:0006412">
    <property type="term" value="P:translation"/>
    <property type="evidence" value="ECO:0007669"/>
    <property type="project" value="UniProtKB-UniRule"/>
</dbReference>
<dbReference type="CDD" id="cd00392">
    <property type="entry name" value="Ribosomal_L13"/>
    <property type="match status" value="1"/>
</dbReference>
<dbReference type="FunFam" id="3.90.1180.10:FF:000001">
    <property type="entry name" value="50S ribosomal protein L13"/>
    <property type="match status" value="1"/>
</dbReference>
<dbReference type="Gene3D" id="3.90.1180.10">
    <property type="entry name" value="Ribosomal protein L13"/>
    <property type="match status" value="1"/>
</dbReference>
<dbReference type="HAMAP" id="MF_01366">
    <property type="entry name" value="Ribosomal_uL13"/>
    <property type="match status" value="1"/>
</dbReference>
<dbReference type="InterPro" id="IPR005822">
    <property type="entry name" value="Ribosomal_uL13"/>
</dbReference>
<dbReference type="InterPro" id="IPR005823">
    <property type="entry name" value="Ribosomal_uL13_bac-type"/>
</dbReference>
<dbReference type="InterPro" id="IPR023563">
    <property type="entry name" value="Ribosomal_uL13_CS"/>
</dbReference>
<dbReference type="InterPro" id="IPR036899">
    <property type="entry name" value="Ribosomal_uL13_sf"/>
</dbReference>
<dbReference type="NCBIfam" id="TIGR01066">
    <property type="entry name" value="rplM_bact"/>
    <property type="match status" value="1"/>
</dbReference>
<dbReference type="PANTHER" id="PTHR11545:SF2">
    <property type="entry name" value="LARGE RIBOSOMAL SUBUNIT PROTEIN UL13M"/>
    <property type="match status" value="1"/>
</dbReference>
<dbReference type="PANTHER" id="PTHR11545">
    <property type="entry name" value="RIBOSOMAL PROTEIN L13"/>
    <property type="match status" value="1"/>
</dbReference>
<dbReference type="Pfam" id="PF00572">
    <property type="entry name" value="Ribosomal_L13"/>
    <property type="match status" value="1"/>
</dbReference>
<dbReference type="PIRSF" id="PIRSF002181">
    <property type="entry name" value="Ribosomal_L13"/>
    <property type="match status" value="1"/>
</dbReference>
<dbReference type="SUPFAM" id="SSF52161">
    <property type="entry name" value="Ribosomal protein L13"/>
    <property type="match status" value="1"/>
</dbReference>
<dbReference type="PROSITE" id="PS00783">
    <property type="entry name" value="RIBOSOMAL_L13"/>
    <property type="match status" value="1"/>
</dbReference>
<accession>A3MZW6</accession>
<protein>
    <recommendedName>
        <fullName evidence="1">Large ribosomal subunit protein uL13</fullName>
    </recommendedName>
    <alternativeName>
        <fullName evidence="2">50S ribosomal protein L13</fullName>
    </alternativeName>
</protein>
<sequence length="142" mass="16052">MKTFVAKPETVKRDWYVVDATGKTLGRLATELARRLRGKHKAEYTPHVDTGDYIIVINAEKVAVTGKKETDKIYYWHTGYVGGIKDATFKEMIARRPEAVIEIAVKGMLPKGPLGREMFRKLKVYAGNEHNHAAQQPQVLDI</sequence>
<reference key="1">
    <citation type="journal article" date="2008" name="J. Bacteriol.">
        <title>The complete genome sequence of Actinobacillus pleuropneumoniae L20 (serotype 5b).</title>
        <authorList>
            <person name="Foote S.J."/>
            <person name="Bosse J.T."/>
            <person name="Bouevitch A.B."/>
            <person name="Langford P.R."/>
            <person name="Young N.M."/>
            <person name="Nash J.H.E."/>
        </authorList>
    </citation>
    <scope>NUCLEOTIDE SEQUENCE [LARGE SCALE GENOMIC DNA]</scope>
    <source>
        <strain>L20</strain>
    </source>
</reference>
<feature type="chain" id="PRO_1000055335" description="Large ribosomal subunit protein uL13">
    <location>
        <begin position="1"/>
        <end position="142"/>
    </location>
</feature>
<evidence type="ECO:0000255" key="1">
    <source>
        <dbReference type="HAMAP-Rule" id="MF_01366"/>
    </source>
</evidence>
<evidence type="ECO:0000305" key="2"/>
<name>RL13_ACTP2</name>
<comment type="function">
    <text evidence="1">This protein is one of the early assembly proteins of the 50S ribosomal subunit, although it is not seen to bind rRNA by itself. It is important during the early stages of 50S assembly.</text>
</comment>
<comment type="subunit">
    <text evidence="1">Part of the 50S ribosomal subunit.</text>
</comment>
<comment type="similarity">
    <text evidence="1">Belongs to the universal ribosomal protein uL13 family.</text>
</comment>